<name>PDE6D_BOVIN</name>
<evidence type="ECO:0000250" key="1"/>
<evidence type="ECO:0000250" key="2">
    <source>
        <dbReference type="UniProtKB" id="O43924"/>
    </source>
</evidence>
<evidence type="ECO:0000250" key="3">
    <source>
        <dbReference type="UniProtKB" id="O55057"/>
    </source>
</evidence>
<evidence type="ECO:0000269" key="4">
    <source>
    </source>
</evidence>
<evidence type="ECO:0000269" key="5">
    <source>
    </source>
</evidence>
<evidence type="ECO:0000269" key="6">
    <source>
    </source>
</evidence>
<evidence type="ECO:0000305" key="7"/>
<evidence type="ECO:0000305" key="8">
    <source>
    </source>
</evidence>
<dbReference type="EMBL" id="U65073">
    <property type="protein sequence ID" value="AAC48634.1"/>
    <property type="molecule type" value="mRNA"/>
</dbReference>
<dbReference type="RefSeq" id="NP_776845.1">
    <property type="nucleotide sequence ID" value="NM_174420.2"/>
</dbReference>
<dbReference type="SMR" id="Q95142"/>
<dbReference type="BioGRID" id="159267">
    <property type="interactions" value="1"/>
</dbReference>
<dbReference type="CORUM" id="Q95142"/>
<dbReference type="FunCoup" id="Q95142">
    <property type="interactions" value="2934"/>
</dbReference>
<dbReference type="STRING" id="9913.ENSBTAP00000058012"/>
<dbReference type="BindingDB" id="Q95142"/>
<dbReference type="ChEMBL" id="CHEMBL2096979"/>
<dbReference type="DrugCentral" id="Q95142"/>
<dbReference type="PaxDb" id="9913-ENSBTAP00000025947"/>
<dbReference type="Ensembl" id="ENSBTAT00000025947.4">
    <property type="protein sequence ID" value="ENSBTAP00000025947.2"/>
    <property type="gene ID" value="ENSBTAG00000019480.4"/>
</dbReference>
<dbReference type="GeneID" id="281976"/>
<dbReference type="KEGG" id="bta:281976"/>
<dbReference type="CTD" id="5147"/>
<dbReference type="VEuPathDB" id="HostDB:ENSBTAG00000019480"/>
<dbReference type="VGNC" id="VGNC:32682">
    <property type="gene designation" value="PDE6D"/>
</dbReference>
<dbReference type="eggNOG" id="KOG4038">
    <property type="taxonomic scope" value="Eukaryota"/>
</dbReference>
<dbReference type="GeneTree" id="ENSGT00390000000263"/>
<dbReference type="HOGENOM" id="CLU_119682_0_0_1"/>
<dbReference type="InParanoid" id="Q95142"/>
<dbReference type="OMA" id="STNTWQN"/>
<dbReference type="OrthoDB" id="10248777at2759"/>
<dbReference type="TreeFam" id="TF314474"/>
<dbReference type="Reactome" id="R-BTA-5624958">
    <property type="pathway name" value="ARL13B-mediated ciliary trafficking of INPP5E"/>
</dbReference>
<dbReference type="Reactome" id="R-BTA-9648002">
    <property type="pathway name" value="RAS processing"/>
</dbReference>
<dbReference type="PRO" id="PR:Q95142"/>
<dbReference type="Proteomes" id="UP000009136">
    <property type="component" value="Chromosome 2"/>
</dbReference>
<dbReference type="Bgee" id="ENSBTAG00000019480">
    <property type="expression patterns" value="Expressed in oocyte and 103 other cell types or tissues"/>
</dbReference>
<dbReference type="GO" id="GO:0005737">
    <property type="term" value="C:cytoplasm"/>
    <property type="evidence" value="ECO:0000318"/>
    <property type="project" value="GO_Central"/>
</dbReference>
<dbReference type="GO" id="GO:0031410">
    <property type="term" value="C:cytoplasmic vesicle"/>
    <property type="evidence" value="ECO:0000250"/>
    <property type="project" value="UniProtKB"/>
</dbReference>
<dbReference type="GO" id="GO:0030659">
    <property type="term" value="C:cytoplasmic vesicle membrane"/>
    <property type="evidence" value="ECO:0007669"/>
    <property type="project" value="UniProtKB-SubCell"/>
</dbReference>
<dbReference type="GO" id="GO:0005856">
    <property type="term" value="C:cytoskeleton"/>
    <property type="evidence" value="ECO:0007669"/>
    <property type="project" value="UniProtKB-KW"/>
</dbReference>
<dbReference type="GO" id="GO:0005829">
    <property type="term" value="C:cytosol"/>
    <property type="evidence" value="ECO:0000250"/>
    <property type="project" value="UniProtKB"/>
</dbReference>
<dbReference type="GO" id="GO:0042622">
    <property type="term" value="C:photoreceptor outer segment membrane"/>
    <property type="evidence" value="ECO:0000314"/>
    <property type="project" value="CAFA"/>
</dbReference>
<dbReference type="GO" id="GO:0005095">
    <property type="term" value="F:GTPase inhibitor activity"/>
    <property type="evidence" value="ECO:0000250"/>
    <property type="project" value="UniProtKB"/>
</dbReference>
<dbReference type="GO" id="GO:0007601">
    <property type="term" value="P:visual perception"/>
    <property type="evidence" value="ECO:0007669"/>
    <property type="project" value="UniProtKB-KW"/>
</dbReference>
<dbReference type="FunFam" id="2.70.50.40:FF:000002">
    <property type="entry name" value="Retinal rod rhodopsin-sensitive cGMP 3',5'-cyclic phosphodiesterase subunit delta"/>
    <property type="match status" value="1"/>
</dbReference>
<dbReference type="Gene3D" id="2.70.50.40">
    <property type="entry name" value="GMP phosphodiesterase, delta subunit"/>
    <property type="match status" value="1"/>
</dbReference>
<dbReference type="InterPro" id="IPR014756">
    <property type="entry name" value="Ig_E-set"/>
</dbReference>
<dbReference type="InterPro" id="IPR008015">
    <property type="entry name" value="PDED_dom"/>
</dbReference>
<dbReference type="InterPro" id="IPR037036">
    <property type="entry name" value="PDED_dom_sf"/>
</dbReference>
<dbReference type="InterPro" id="IPR017287">
    <property type="entry name" value="Rhodop-sen_GMP-Pdiesterase_dsu"/>
</dbReference>
<dbReference type="PANTHER" id="PTHR12976">
    <property type="entry name" value="RETINAL ROD RHODOPSIN-SENSITIVE CGMP 3',5'-CYCLIC PHOSPHODIESTERASE DELTA-SUBUNIT"/>
    <property type="match status" value="1"/>
</dbReference>
<dbReference type="PANTHER" id="PTHR12976:SF0">
    <property type="entry name" value="RETINAL ROD RHODOPSIN-SENSITIVE CGMP 3',5'-CYCLIC PHOSPHODIESTERASE SUBUNIT DELTA"/>
    <property type="match status" value="1"/>
</dbReference>
<dbReference type="Pfam" id="PF05351">
    <property type="entry name" value="GMP_PDE_delta"/>
    <property type="match status" value="1"/>
</dbReference>
<dbReference type="PIRSF" id="PIRSF037825">
    <property type="entry name" value="GMP-Pdiesterase_delta"/>
    <property type="match status" value="1"/>
</dbReference>
<dbReference type="SUPFAM" id="SSF81296">
    <property type="entry name" value="E set domains"/>
    <property type="match status" value="1"/>
</dbReference>
<sequence>MSAKDERAREILRGFKLNWMNLRDAETGKILWQGTEDLSVPGVEHEARVPKKILKCKAVSRELNFSSAEQMEKFRLEQKVYFKGQCLEEWFFEFGFVIPNSTNTWQSLIEAAPESQMMPASVLTGNVIIETKFFDDDLLVSTSRVRLFYV</sequence>
<gene>
    <name type="primary">PDE6D</name>
</gene>
<accession>Q95142</accession>
<proteinExistence type="evidence at protein level"/>
<protein>
    <recommendedName>
        <fullName>Retinal rod rhodopsin-sensitive cGMP 3',5'-cyclic phosphodiesterase subunit delta</fullName>
        <shortName>GMP-PDE delta</shortName>
    </recommendedName>
</protein>
<feature type="chain" id="PRO_0000221206" description="Retinal rod rhodopsin-sensitive cGMP 3',5'-cyclic phosphodiesterase subunit delta">
    <location>
        <begin position="1"/>
        <end position="150"/>
    </location>
</feature>
<feature type="region of interest" description="Required for association with membranes" evidence="1">
    <location>
        <begin position="144"/>
        <end position="150"/>
    </location>
</feature>
<reference key="1">
    <citation type="journal article" date="1996" name="J. Biol. Chem.">
        <title>Solubilization of membrane-bound rod phosphodiesterase by the rod phosphodiesterase recombinant delta subunit.</title>
        <authorList>
            <person name="Florio S.K."/>
            <person name="Prusti R.K."/>
            <person name="Beavo J.A."/>
        </authorList>
    </citation>
    <scope>NUCLEOTIDE SEQUENCE [MRNA]</scope>
    <scope>PARTIAL PROTEIN SEQUENCE</scope>
    <scope>SUBCELLULAR LOCATION</scope>
    <scope>SUBUNIT</scope>
    <scope>TISSUE SPECIFICITY</scope>
    <source>
        <tissue>Retina</tissue>
    </source>
</reference>
<reference key="2">
    <citation type="journal article" date="2004" name="J. Biol. Chem.">
        <title>Photoreceptor cGMP phosphodiesterase delta subunit (PDEdelta) functions as a prenyl-binding protein.</title>
        <authorList>
            <person name="Zhang H."/>
            <person name="Liu X.H."/>
            <person name="Zhang K."/>
            <person name="Chen C.K."/>
            <person name="Frederick J.M."/>
            <person name="Prestwich G.D."/>
            <person name="Baehr W."/>
        </authorList>
    </citation>
    <scope>FUNCTION</scope>
    <scope>TISSUE SPECIFICITY</scope>
    <scope>SUBCELLULAR LOCATION</scope>
    <scope>SUBUNIT</scope>
</reference>
<reference key="3">
    <citation type="journal article" date="2018" name="J. Biol. Chem.">
        <title>The small GTPase RAB28 is required for phagocytosis of cone outer segments by the murine retinal pigmented epithelium.</title>
        <authorList>
            <person name="Ying G."/>
            <person name="Boldt K."/>
            <person name="Ueffing M."/>
            <person name="Gerstner C.D."/>
            <person name="Frederick J.M."/>
            <person name="Baehr W."/>
        </authorList>
    </citation>
    <scope>INTERACTION WITH RAB28</scope>
</reference>
<comment type="function">
    <text evidence="2 3 4">Promotes the release of prenylated target proteins from cellular membranes (PubMed:8798640). Modulates the activity of prenylated or palmitoylated Ras family members by regulating their subcellular location (By similarity). Required for normal ciliary targeting of farnesylated target proteins, such as INPP5E (By similarity). Modulates the subcellular location of target proteins by acting as a GTP specific dissociation inhibitor (GDI) (By similarity). Required for RAB28 localization to the cone cell outer segments in the retina (By similarity). Increases the affinity of ARL3 for GTP by several orders of magnitude. Stabilizes ARL3-GTP by decreasing the nucleotide dissociation rate (By similarity).</text>
</comment>
<comment type="subunit">
    <text evidence="2 3 4 5 6">Interacts with the prenylated catalytic subunits of PDE6, an oligomer composed of two catalytic chains (PDE6A and PDE6B) and two inhibitory chains (gamma); has no effect on enzyme activity but promotes the release of the prenylated enzyme from cell membrane (PubMed:8798640). Interacts with prenylated GRK1 and GRK7 (PubMed:14561760). Interacts with prenylated INPP5E (By similarity). Interacts with prenylated Ras family members, including HRAS, KRAS, NRAS, RAP2A, RAP2C and RHEB (By similarity). Interacts with RAB13 (prenylated form); dissociates RAB13 from membranes (By similarity). Interacts with RAB28 (prenylated form); the interaction promotes RAB28 delivery to the photoreceptor outer segments (PubMed:30228185). Interacts with RPGR (By similarity). Interacts with ARL2 (PubMed:14561760). Interacts with ARL3; the interaction occurs specifically with the GTP-bound form of ARL3 (By similarity). Interaction with ARL2 and ARL3 promotes release of farnesylated cargo proteins (By similarity).</text>
</comment>
<comment type="subcellular location">
    <subcellularLocation>
        <location evidence="4 8">Cytoplasm</location>
        <location evidence="4 8">Cytosol</location>
    </subcellularLocation>
    <subcellularLocation>
        <location evidence="2">Cytoplasmic vesicle membrane</location>
        <topology evidence="2">Peripheral membrane protein</topology>
    </subcellularLocation>
    <subcellularLocation>
        <location evidence="2">Cytoplasm</location>
        <location evidence="2">Cytoskeleton</location>
        <location evidence="2">Cilium basal body</location>
    </subcellularLocation>
</comment>
<comment type="tissue specificity">
    <text evidence="4 6">Detected in retina photoreceptor cells, especially in rods (at protein level) (PubMed:14561760, PubMed:8798640). Detected in retina, brain and adrenal gland (PubMed:8798640).</text>
</comment>
<comment type="similarity">
    <text evidence="7">Belongs to the PDE6D/unc-119 family.</text>
</comment>
<organism>
    <name type="scientific">Bos taurus</name>
    <name type="common">Bovine</name>
    <dbReference type="NCBI Taxonomy" id="9913"/>
    <lineage>
        <taxon>Eukaryota</taxon>
        <taxon>Metazoa</taxon>
        <taxon>Chordata</taxon>
        <taxon>Craniata</taxon>
        <taxon>Vertebrata</taxon>
        <taxon>Euteleostomi</taxon>
        <taxon>Mammalia</taxon>
        <taxon>Eutheria</taxon>
        <taxon>Laurasiatheria</taxon>
        <taxon>Artiodactyla</taxon>
        <taxon>Ruminantia</taxon>
        <taxon>Pecora</taxon>
        <taxon>Bovidae</taxon>
        <taxon>Bovinae</taxon>
        <taxon>Bos</taxon>
    </lineage>
</organism>
<keyword id="KW-0966">Cell projection</keyword>
<keyword id="KW-0140">cGMP</keyword>
<keyword id="KW-0963">Cytoplasm</keyword>
<keyword id="KW-0968">Cytoplasmic vesicle</keyword>
<keyword id="KW-0206">Cytoskeleton</keyword>
<keyword id="KW-0903">Direct protein sequencing</keyword>
<keyword id="KW-0472">Membrane</keyword>
<keyword id="KW-1185">Reference proteome</keyword>
<keyword id="KW-0716">Sensory transduction</keyword>
<keyword id="KW-0844">Vision</keyword>